<proteinExistence type="inferred from homology"/>
<comment type="function">
    <text evidence="1">Catalyzes amidations at positions B, D, E, and G on adenosylcobyrinic A,C-diamide. NH(2) groups are provided by glutamine, and one molecule of ATP is hydrogenolyzed for each amidation.</text>
</comment>
<comment type="pathway">
    <text evidence="1">Cofactor biosynthesis; adenosylcobalamin biosynthesis.</text>
</comment>
<comment type="similarity">
    <text evidence="1">Belongs to the CobB/CobQ family. CobQ subfamily.</text>
</comment>
<protein>
    <recommendedName>
        <fullName evidence="1">Cobyric acid synthase</fullName>
    </recommendedName>
</protein>
<dbReference type="EMBL" id="FM200053">
    <property type="protein sequence ID" value="CAR58938.1"/>
    <property type="molecule type" value="Genomic_DNA"/>
</dbReference>
<dbReference type="RefSeq" id="WP_000189676.1">
    <property type="nucleotide sequence ID" value="NC_011147.1"/>
</dbReference>
<dbReference type="SMR" id="B5BG57"/>
<dbReference type="KEGG" id="sek:SSPA0797"/>
<dbReference type="HOGENOM" id="CLU_019250_2_2_6"/>
<dbReference type="UniPathway" id="UPA00148"/>
<dbReference type="Proteomes" id="UP000001869">
    <property type="component" value="Chromosome"/>
</dbReference>
<dbReference type="GO" id="GO:0015420">
    <property type="term" value="F:ABC-type vitamin B12 transporter activity"/>
    <property type="evidence" value="ECO:0007669"/>
    <property type="project" value="UniProtKB-UniRule"/>
</dbReference>
<dbReference type="GO" id="GO:0003824">
    <property type="term" value="F:catalytic activity"/>
    <property type="evidence" value="ECO:0007669"/>
    <property type="project" value="InterPro"/>
</dbReference>
<dbReference type="GO" id="GO:0009236">
    <property type="term" value="P:cobalamin biosynthetic process"/>
    <property type="evidence" value="ECO:0007669"/>
    <property type="project" value="UniProtKB-UniRule"/>
</dbReference>
<dbReference type="CDD" id="cd05389">
    <property type="entry name" value="CobQ_N"/>
    <property type="match status" value="1"/>
</dbReference>
<dbReference type="CDD" id="cd01750">
    <property type="entry name" value="GATase1_CobQ"/>
    <property type="match status" value="1"/>
</dbReference>
<dbReference type="Gene3D" id="3.40.50.880">
    <property type="match status" value="1"/>
</dbReference>
<dbReference type="Gene3D" id="3.40.50.300">
    <property type="entry name" value="P-loop containing nucleotide triphosphate hydrolases"/>
    <property type="match status" value="1"/>
</dbReference>
<dbReference type="HAMAP" id="MF_00028">
    <property type="entry name" value="CobQ"/>
    <property type="match status" value="1"/>
</dbReference>
<dbReference type="InterPro" id="IPR029062">
    <property type="entry name" value="Class_I_gatase-like"/>
</dbReference>
<dbReference type="InterPro" id="IPR002586">
    <property type="entry name" value="CobQ/CobB/MinD/ParA_Nub-bd_dom"/>
</dbReference>
<dbReference type="InterPro" id="IPR033949">
    <property type="entry name" value="CobQ_GATase1"/>
</dbReference>
<dbReference type="InterPro" id="IPR047045">
    <property type="entry name" value="CobQ_N"/>
</dbReference>
<dbReference type="InterPro" id="IPR004459">
    <property type="entry name" value="CobQ_synth"/>
</dbReference>
<dbReference type="InterPro" id="IPR011698">
    <property type="entry name" value="GATase_3"/>
</dbReference>
<dbReference type="InterPro" id="IPR027417">
    <property type="entry name" value="P-loop_NTPase"/>
</dbReference>
<dbReference type="NCBIfam" id="TIGR00313">
    <property type="entry name" value="cobQ"/>
    <property type="match status" value="1"/>
</dbReference>
<dbReference type="NCBIfam" id="NF001989">
    <property type="entry name" value="PRK00784.1"/>
    <property type="match status" value="1"/>
</dbReference>
<dbReference type="PANTHER" id="PTHR21343:SF1">
    <property type="entry name" value="COBYRIC ACID SYNTHASE"/>
    <property type="match status" value="1"/>
</dbReference>
<dbReference type="PANTHER" id="PTHR21343">
    <property type="entry name" value="DETHIOBIOTIN SYNTHETASE"/>
    <property type="match status" value="1"/>
</dbReference>
<dbReference type="Pfam" id="PF01656">
    <property type="entry name" value="CbiA"/>
    <property type="match status" value="1"/>
</dbReference>
<dbReference type="Pfam" id="PF07685">
    <property type="entry name" value="GATase_3"/>
    <property type="match status" value="1"/>
</dbReference>
<dbReference type="SUPFAM" id="SSF52317">
    <property type="entry name" value="Class I glutamine amidotransferase-like"/>
    <property type="match status" value="1"/>
</dbReference>
<dbReference type="SUPFAM" id="SSF52540">
    <property type="entry name" value="P-loop containing nucleoside triphosphate hydrolases"/>
    <property type="match status" value="1"/>
</dbReference>
<dbReference type="PROSITE" id="PS51274">
    <property type="entry name" value="GATASE_COBBQ"/>
    <property type="match status" value="1"/>
</dbReference>
<gene>
    <name evidence="1" type="primary">cobQ</name>
    <name type="ordered locus">SSPA0797</name>
</gene>
<organism>
    <name type="scientific">Salmonella paratyphi A (strain AKU_12601)</name>
    <dbReference type="NCBI Taxonomy" id="554290"/>
    <lineage>
        <taxon>Bacteria</taxon>
        <taxon>Pseudomonadati</taxon>
        <taxon>Pseudomonadota</taxon>
        <taxon>Gammaproteobacteria</taxon>
        <taxon>Enterobacterales</taxon>
        <taxon>Enterobacteriaceae</taxon>
        <taxon>Salmonella</taxon>
    </lineage>
</organism>
<sequence>MTQAVMLQGTASDVGKSVLVAGLCRIFYQDGLRTAPFKSQNMALNSGITPDGKEMGRAQIFQAEAAGITPDVRMNPVLLKPTSDRQAQVVLMGKVATNMDAVSYHDYKPRLREQILAVYNSLAQEYDVIVLEGAGSPAEINLRDRDIVNMGMAEMAQCPVILVADIDRGGVFAAIYGTLALLHKQERDRVKGVIINKFRGDVALLYSGIEQIESLTGVPVLGVMPWLDVDLEDEDGVALQNDKYRGNAPRDITIAIVQLPHISNFTDFNALAAQPDVRIRYIRRPEALTDADLVILPGSKNTLSDLAWLRESGMADAVLQTHRQGVPVMGICGGYQMLGDTIVDEVESGLGTQPGLGLLNTITRFAQDKTTTQVNATMSGELPGWLAAAAGLPVRGYEIHMGETVLQEGCCTAMTLQKNGCSVADGAVTADGLAFGTYLHGLFDSDAFTRAVVNGLRARKGLAPWETTFCYAEHKARQFDLLAEAMRQHIDIDKIYTIMQQHQEPV</sequence>
<keyword id="KW-0169">Cobalamin biosynthesis</keyword>
<keyword id="KW-0315">Glutamine amidotransferase</keyword>
<name>COBQ_SALPK</name>
<accession>B5BG57</accession>
<feature type="chain" id="PRO_1000090248" description="Cobyric acid synthase">
    <location>
        <begin position="1"/>
        <end position="506"/>
    </location>
</feature>
<feature type="domain" description="GATase cobBQ-type" evidence="1">
    <location>
        <begin position="251"/>
        <end position="448"/>
    </location>
</feature>
<feature type="active site" description="Nucleophile" evidence="1">
    <location>
        <position position="332"/>
    </location>
</feature>
<feature type="active site" evidence="1">
    <location>
        <position position="440"/>
    </location>
</feature>
<reference key="1">
    <citation type="journal article" date="2009" name="BMC Genomics">
        <title>Pseudogene accumulation in the evolutionary histories of Salmonella enterica serovars Paratyphi A and Typhi.</title>
        <authorList>
            <person name="Holt K.E."/>
            <person name="Thomson N.R."/>
            <person name="Wain J."/>
            <person name="Langridge G.C."/>
            <person name="Hasan R."/>
            <person name="Bhutta Z.A."/>
            <person name="Quail M.A."/>
            <person name="Norbertczak H."/>
            <person name="Walker D."/>
            <person name="Simmonds M."/>
            <person name="White B."/>
            <person name="Bason N."/>
            <person name="Mungall K."/>
            <person name="Dougan G."/>
            <person name="Parkhill J."/>
        </authorList>
    </citation>
    <scope>NUCLEOTIDE SEQUENCE [LARGE SCALE GENOMIC DNA]</scope>
    <source>
        <strain>AKU_12601</strain>
    </source>
</reference>
<evidence type="ECO:0000255" key="1">
    <source>
        <dbReference type="HAMAP-Rule" id="MF_00028"/>
    </source>
</evidence>